<evidence type="ECO:0000250" key="1">
    <source>
        <dbReference type="UniProtKB" id="Q8BGE6"/>
    </source>
</evidence>
<evidence type="ECO:0000250" key="2">
    <source>
        <dbReference type="UniProtKB" id="Q8WYN0"/>
    </source>
</evidence>
<evidence type="ECO:0000250" key="3">
    <source>
        <dbReference type="UniProtKB" id="Q9Y4P1"/>
    </source>
</evidence>
<evidence type="ECO:0000305" key="4"/>
<keyword id="KW-0072">Autophagy</keyword>
<keyword id="KW-0963">Cytoplasm</keyword>
<keyword id="KW-0378">Hydrolase</keyword>
<keyword id="KW-0443">Lipid metabolism</keyword>
<keyword id="KW-0645">Protease</keyword>
<keyword id="KW-0653">Protein transport</keyword>
<keyword id="KW-1185">Reference proteome</keyword>
<keyword id="KW-0788">Thiol protease</keyword>
<keyword id="KW-0813">Transport</keyword>
<keyword id="KW-0833">Ubl conjugation pathway</keyword>
<feature type="chain" id="PRO_0000215842" description="Cysteine protease ATG4A">
    <location>
        <begin position="1"/>
        <end position="397"/>
    </location>
</feature>
<feature type="short sequence motif" description="LIR" evidence="2">
    <location>
        <begin position="392"/>
        <end position="395"/>
    </location>
</feature>
<feature type="active site" description="Nucleophile" evidence="3">
    <location>
        <position position="79"/>
    </location>
</feature>
<feature type="active site" evidence="3">
    <location>
        <position position="279"/>
    </location>
</feature>
<feature type="active site" evidence="3">
    <location>
        <position position="281"/>
    </location>
</feature>
<organism>
    <name type="scientific">Xenopus laevis</name>
    <name type="common">African clawed frog</name>
    <dbReference type="NCBI Taxonomy" id="8355"/>
    <lineage>
        <taxon>Eukaryota</taxon>
        <taxon>Metazoa</taxon>
        <taxon>Chordata</taxon>
        <taxon>Craniata</taxon>
        <taxon>Vertebrata</taxon>
        <taxon>Euteleostomi</taxon>
        <taxon>Amphibia</taxon>
        <taxon>Batrachia</taxon>
        <taxon>Anura</taxon>
        <taxon>Pipoidea</taxon>
        <taxon>Pipidae</taxon>
        <taxon>Xenopodinae</taxon>
        <taxon>Xenopus</taxon>
        <taxon>Xenopus</taxon>
    </lineage>
</organism>
<reference key="1">
    <citation type="submission" date="2004-06" db="EMBL/GenBank/DDBJ databases">
        <authorList>
            <consortium name="NIH - Xenopus Gene Collection (XGC) project"/>
        </authorList>
    </citation>
    <scope>NUCLEOTIDE SEQUENCE [LARGE SCALE MRNA]</scope>
    <source>
        <tissue>Ovary</tissue>
    </source>
</reference>
<sequence>MDSDPVSDYLKYENEPEYLDLEELPDSDEPVYILGKQYDTKTDKCDLQSDIVSRLWFTYRKKFSPIGGTGPSSDTGWGCMLRCGQMMLAQALVCQHLGRDWRWEKHKNHPEEYQQILQCFLDRKDCCYSIHQMAQMGVGEGKSIGEWFGPNTVAQVLKKLALFDEWNSLAVYVSMDNTVVVEDIKTMCKYQPQSCSMAQAASHQSTWSRCRDTSGHCSGWRPLLLVVPLRLGINHINPVYVDAFKACFKMPQSLGALGGKPNHAYYFIGFSGDEIIYLDPHTTQTFVDTEEAGTVQDQTYHCQKGPNSMKVLNLDPSVALGFFCKDENDFNNWCEVIEKEILKHQSLRMFELTPKHPPHWPPFIPPTKPEVTTTGAELIESTDKLFDVEEEFEILSV</sequence>
<proteinExistence type="evidence at transcript level"/>
<name>ATG4A_XENLA</name>
<gene>
    <name evidence="2" type="primary">atg4a</name>
    <name evidence="2" type="synonym">apg4a</name>
</gene>
<protein>
    <recommendedName>
        <fullName evidence="4">Cysteine protease ATG4A</fullName>
        <ecNumber evidence="2">3.4.22.-</ecNumber>
    </recommendedName>
    <alternativeName>
        <fullName evidence="2">Autophagy-related protein 4 homolog A</fullName>
    </alternativeName>
</protein>
<dbReference type="EC" id="3.4.22.-" evidence="2"/>
<dbReference type="EMBL" id="BC073017">
    <property type="protein sequence ID" value="AAH73017.1"/>
    <property type="molecule type" value="mRNA"/>
</dbReference>
<dbReference type="SMR" id="Q6GPU1"/>
<dbReference type="MEROPS" id="C54.002"/>
<dbReference type="GeneID" id="108698409"/>
<dbReference type="KEGG" id="xla:108698409"/>
<dbReference type="AGR" id="Xenbase:XB-GENE-922684"/>
<dbReference type="Xenbase" id="XB-GENE-922684">
    <property type="gene designation" value="atg4a.L"/>
</dbReference>
<dbReference type="OMA" id="TGFGCMI"/>
<dbReference type="OrthoDB" id="2960936at2759"/>
<dbReference type="Proteomes" id="UP000186698">
    <property type="component" value="Chromosome 8L"/>
</dbReference>
<dbReference type="Bgee" id="108698409">
    <property type="expression patterns" value="Expressed in muscle tissue and 19 other cell types or tissues"/>
</dbReference>
<dbReference type="GO" id="GO:0005737">
    <property type="term" value="C:cytoplasm"/>
    <property type="evidence" value="ECO:0000318"/>
    <property type="project" value="GO_Central"/>
</dbReference>
<dbReference type="GO" id="GO:0004197">
    <property type="term" value="F:cysteine-type endopeptidase activity"/>
    <property type="evidence" value="ECO:0000318"/>
    <property type="project" value="GO_Central"/>
</dbReference>
<dbReference type="GO" id="GO:0008234">
    <property type="term" value="F:cysteine-type peptidase activity"/>
    <property type="evidence" value="ECO:0000250"/>
    <property type="project" value="UniProtKB"/>
</dbReference>
<dbReference type="GO" id="GO:0019786">
    <property type="term" value="F:protein-phosphatidylethanolamide deconjugating activity"/>
    <property type="evidence" value="ECO:0000250"/>
    <property type="project" value="UniProtKB"/>
</dbReference>
<dbReference type="GO" id="GO:0035973">
    <property type="term" value="P:aggrephagy"/>
    <property type="evidence" value="ECO:0000318"/>
    <property type="project" value="GO_Central"/>
</dbReference>
<dbReference type="GO" id="GO:0000045">
    <property type="term" value="P:autophagosome assembly"/>
    <property type="evidence" value="ECO:0000318"/>
    <property type="project" value="GO_Central"/>
</dbReference>
<dbReference type="GO" id="GO:0006914">
    <property type="term" value="P:autophagy"/>
    <property type="evidence" value="ECO:0000250"/>
    <property type="project" value="UniProtKB"/>
</dbReference>
<dbReference type="GO" id="GO:0006629">
    <property type="term" value="P:lipid metabolic process"/>
    <property type="evidence" value="ECO:0007669"/>
    <property type="project" value="UniProtKB-KW"/>
</dbReference>
<dbReference type="GO" id="GO:0000423">
    <property type="term" value="P:mitophagy"/>
    <property type="evidence" value="ECO:0000318"/>
    <property type="project" value="GO_Central"/>
</dbReference>
<dbReference type="GO" id="GO:0034727">
    <property type="term" value="P:piecemeal microautophagy of the nucleus"/>
    <property type="evidence" value="ECO:0000318"/>
    <property type="project" value="GO_Central"/>
</dbReference>
<dbReference type="GO" id="GO:0051697">
    <property type="term" value="P:protein delipidation"/>
    <property type="evidence" value="ECO:0000250"/>
    <property type="project" value="UniProtKB"/>
</dbReference>
<dbReference type="GO" id="GO:0016485">
    <property type="term" value="P:protein processing"/>
    <property type="evidence" value="ECO:0000318"/>
    <property type="project" value="GO_Central"/>
</dbReference>
<dbReference type="GO" id="GO:0015031">
    <property type="term" value="P:protein transport"/>
    <property type="evidence" value="ECO:0007669"/>
    <property type="project" value="UniProtKB-KW"/>
</dbReference>
<dbReference type="InterPro" id="IPR038765">
    <property type="entry name" value="Papain-like_cys_pep_sf"/>
</dbReference>
<dbReference type="InterPro" id="IPR005078">
    <property type="entry name" value="Peptidase_C54"/>
</dbReference>
<dbReference type="InterPro" id="IPR046792">
    <property type="entry name" value="Peptidase_C54_cat"/>
</dbReference>
<dbReference type="PANTHER" id="PTHR22624">
    <property type="entry name" value="CYSTEINE PROTEASE ATG4"/>
    <property type="match status" value="1"/>
</dbReference>
<dbReference type="PANTHER" id="PTHR22624:SF35">
    <property type="entry name" value="CYSTEINE PROTEASE ATG4A"/>
    <property type="match status" value="1"/>
</dbReference>
<dbReference type="Pfam" id="PF03416">
    <property type="entry name" value="Peptidase_C54"/>
    <property type="match status" value="1"/>
</dbReference>
<dbReference type="SUPFAM" id="SSF54001">
    <property type="entry name" value="Cysteine proteinases"/>
    <property type="match status" value="1"/>
</dbReference>
<comment type="function">
    <text evidence="2">Cysteine protease that plays a key role in autophagy by mediating both proteolytic activation and delipidation of ATG8 family proteins. The protease activity is required for proteolytic activation of ATG8 family proteins: cleaves the C-terminal amino acid of ATG8 proteins to reveal a C-terminal glycine. Exposure of the glycine at the C-terminus is essential for ATG8 proteins conjugation to phosphatidylethanolamine (PE) and insertion to membranes, which is necessary for autophagy. Protease activity is also required to counteract formation of high-molecular weight conjugates of ATG8 proteins (ATG8ylation): acts as a deubiquitinating-like enzyme that removes ATG8 conjugated to other proteins, such as ATG3. In addition to the protease activity, also mediates delipidation of ATG8 family proteins. Catalyzes delipidation of PE-conjugated forms of ATG8 proteins during macroautophagy.</text>
</comment>
<comment type="catalytic activity">
    <reaction evidence="2">
        <text>[protein]-C-terminal L-amino acid-glycyl-phosphatidylethanolamide + H2O = [protein]-C-terminal L-amino acid-glycine + a 1,2-diacyl-sn-glycero-3-phosphoethanolamine</text>
        <dbReference type="Rhea" id="RHEA:67548"/>
        <dbReference type="Rhea" id="RHEA-COMP:17323"/>
        <dbReference type="Rhea" id="RHEA-COMP:17324"/>
        <dbReference type="ChEBI" id="CHEBI:15377"/>
        <dbReference type="ChEBI" id="CHEBI:64612"/>
        <dbReference type="ChEBI" id="CHEBI:172940"/>
        <dbReference type="ChEBI" id="CHEBI:172941"/>
    </reaction>
    <physiologicalReaction direction="left-to-right" evidence="2">
        <dbReference type="Rhea" id="RHEA:67549"/>
    </physiologicalReaction>
</comment>
<comment type="subcellular location">
    <subcellularLocation>
        <location evidence="1">Cytoplasm</location>
    </subcellularLocation>
</comment>
<comment type="domain">
    <text evidence="2">The LIR motif (LC3-interacting region) is required for the interaction with the ATG8 family proteins. Required for proteolytic activation and delipidation of ATG8 proteins.</text>
</comment>
<comment type="similarity">
    <text evidence="4">Belongs to the peptidase C54 family.</text>
</comment>
<accession>Q6GPU1</accession>